<protein>
    <recommendedName>
        <fullName evidence="1">Aspartyl/glutamyl-tRNA(Asn/Gln) amidotransferase subunit B</fullName>
        <shortName evidence="1">Asp/Glu-ADT subunit B</shortName>
        <ecNumber evidence="1">6.3.5.-</ecNumber>
    </recommendedName>
</protein>
<sequence length="475" mass="53736">MHFETVIGLEVHVELKTDSKMFSPSPAHFGAEPNSNTNVIDLAYPGVLPVVNRRAVDWAMRASMALNMEIATESKFDRKNYFYPDNPKAYQISQFDQPIGEHGYIDIEVDGETKRIGITRLHMEEDAGKSTHKDGYSLVDLNRQGTPLIEIVSEPDIRSPQEAYAYLEKLRSIIQYTGVSDCKMEEGSLRCDANISLRPYGQEEFGTKAELKNLNSFNYVRKGLEYEEKRQEEELLNGGEVLQETRRFDESTGKTILMRVKEGSDDYRYFPEPDIVPLYVDEAWKERVRQTIPELPDARKEKYVNEYGLPAYDAHVLTLTKEMSDFFEGAVEAGADVKLTSNWLMGGVNEYLNKNQVELQDTKLTPENLAGMIKLIEDGTMSSKIAKKVFPELAENGGDAKQIMEDKGLVQISDESVLLNFVNEALDNNPQSVEDFKNGKGRAKGFLVGQIMKASKGQANPQMVNKLLQQELDKR</sequence>
<gene>
    <name evidence="1" type="primary">gatB</name>
    <name type="ordered locus">Sca_1471</name>
</gene>
<reference key="1">
    <citation type="journal article" date="2009" name="Appl. Environ. Microbiol.">
        <title>Genome analysis of the meat starter culture bacterium Staphylococcus carnosus TM300.</title>
        <authorList>
            <person name="Rosenstein R."/>
            <person name="Nerz C."/>
            <person name="Biswas L."/>
            <person name="Resch A."/>
            <person name="Raddatz G."/>
            <person name="Schuster S.C."/>
            <person name="Goetz F."/>
        </authorList>
    </citation>
    <scope>NUCLEOTIDE SEQUENCE [LARGE SCALE GENOMIC DNA]</scope>
    <source>
        <strain>TM300</strain>
    </source>
</reference>
<proteinExistence type="inferred from homology"/>
<comment type="function">
    <text evidence="1">Allows the formation of correctly charged Asn-tRNA(Asn) or Gln-tRNA(Gln) through the transamidation of misacylated Asp-tRNA(Asn) or Glu-tRNA(Gln) in organisms which lack either or both of asparaginyl-tRNA or glutaminyl-tRNA synthetases. The reaction takes place in the presence of glutamine and ATP through an activated phospho-Asp-tRNA(Asn) or phospho-Glu-tRNA(Gln).</text>
</comment>
<comment type="catalytic activity">
    <reaction evidence="1">
        <text>L-glutamyl-tRNA(Gln) + L-glutamine + ATP + H2O = L-glutaminyl-tRNA(Gln) + L-glutamate + ADP + phosphate + H(+)</text>
        <dbReference type="Rhea" id="RHEA:17521"/>
        <dbReference type="Rhea" id="RHEA-COMP:9681"/>
        <dbReference type="Rhea" id="RHEA-COMP:9684"/>
        <dbReference type="ChEBI" id="CHEBI:15377"/>
        <dbReference type="ChEBI" id="CHEBI:15378"/>
        <dbReference type="ChEBI" id="CHEBI:29985"/>
        <dbReference type="ChEBI" id="CHEBI:30616"/>
        <dbReference type="ChEBI" id="CHEBI:43474"/>
        <dbReference type="ChEBI" id="CHEBI:58359"/>
        <dbReference type="ChEBI" id="CHEBI:78520"/>
        <dbReference type="ChEBI" id="CHEBI:78521"/>
        <dbReference type="ChEBI" id="CHEBI:456216"/>
    </reaction>
</comment>
<comment type="catalytic activity">
    <reaction evidence="1">
        <text>L-aspartyl-tRNA(Asn) + L-glutamine + ATP + H2O = L-asparaginyl-tRNA(Asn) + L-glutamate + ADP + phosphate + 2 H(+)</text>
        <dbReference type="Rhea" id="RHEA:14513"/>
        <dbReference type="Rhea" id="RHEA-COMP:9674"/>
        <dbReference type="Rhea" id="RHEA-COMP:9677"/>
        <dbReference type="ChEBI" id="CHEBI:15377"/>
        <dbReference type="ChEBI" id="CHEBI:15378"/>
        <dbReference type="ChEBI" id="CHEBI:29985"/>
        <dbReference type="ChEBI" id="CHEBI:30616"/>
        <dbReference type="ChEBI" id="CHEBI:43474"/>
        <dbReference type="ChEBI" id="CHEBI:58359"/>
        <dbReference type="ChEBI" id="CHEBI:78515"/>
        <dbReference type="ChEBI" id="CHEBI:78516"/>
        <dbReference type="ChEBI" id="CHEBI:456216"/>
    </reaction>
</comment>
<comment type="subunit">
    <text evidence="1">Heterotrimer of A, B and C subunits.</text>
</comment>
<comment type="similarity">
    <text evidence="1">Belongs to the GatB/GatE family. GatB subfamily.</text>
</comment>
<evidence type="ECO:0000255" key="1">
    <source>
        <dbReference type="HAMAP-Rule" id="MF_00121"/>
    </source>
</evidence>
<feature type="chain" id="PRO_1000122534" description="Aspartyl/glutamyl-tRNA(Asn/Gln) amidotransferase subunit B">
    <location>
        <begin position="1"/>
        <end position="475"/>
    </location>
</feature>
<accession>B9DMT7</accession>
<name>GATB_STACT</name>
<keyword id="KW-0067">ATP-binding</keyword>
<keyword id="KW-0436">Ligase</keyword>
<keyword id="KW-0547">Nucleotide-binding</keyword>
<keyword id="KW-0648">Protein biosynthesis</keyword>
<keyword id="KW-1185">Reference proteome</keyword>
<organism>
    <name type="scientific">Staphylococcus carnosus (strain TM300)</name>
    <dbReference type="NCBI Taxonomy" id="396513"/>
    <lineage>
        <taxon>Bacteria</taxon>
        <taxon>Bacillati</taxon>
        <taxon>Bacillota</taxon>
        <taxon>Bacilli</taxon>
        <taxon>Bacillales</taxon>
        <taxon>Staphylococcaceae</taxon>
        <taxon>Staphylococcus</taxon>
    </lineage>
</organism>
<dbReference type="EC" id="6.3.5.-" evidence="1"/>
<dbReference type="EMBL" id="AM295250">
    <property type="protein sequence ID" value="CAL28376.1"/>
    <property type="molecule type" value="Genomic_DNA"/>
</dbReference>
<dbReference type="RefSeq" id="WP_015900716.1">
    <property type="nucleotide sequence ID" value="NC_012121.1"/>
</dbReference>
<dbReference type="SMR" id="B9DMT7"/>
<dbReference type="GeneID" id="93793926"/>
<dbReference type="KEGG" id="sca:SCA_1471"/>
<dbReference type="eggNOG" id="COG0064">
    <property type="taxonomic scope" value="Bacteria"/>
</dbReference>
<dbReference type="HOGENOM" id="CLU_019240_0_0_9"/>
<dbReference type="OrthoDB" id="9804078at2"/>
<dbReference type="BioCyc" id="SCAR396513:SCA_RS07480-MONOMER"/>
<dbReference type="Proteomes" id="UP000000444">
    <property type="component" value="Chromosome"/>
</dbReference>
<dbReference type="GO" id="GO:0050566">
    <property type="term" value="F:asparaginyl-tRNA synthase (glutamine-hydrolyzing) activity"/>
    <property type="evidence" value="ECO:0007669"/>
    <property type="project" value="RHEA"/>
</dbReference>
<dbReference type="GO" id="GO:0005524">
    <property type="term" value="F:ATP binding"/>
    <property type="evidence" value="ECO:0007669"/>
    <property type="project" value="UniProtKB-KW"/>
</dbReference>
<dbReference type="GO" id="GO:0050567">
    <property type="term" value="F:glutaminyl-tRNA synthase (glutamine-hydrolyzing) activity"/>
    <property type="evidence" value="ECO:0007669"/>
    <property type="project" value="UniProtKB-UniRule"/>
</dbReference>
<dbReference type="GO" id="GO:0070681">
    <property type="term" value="P:glutaminyl-tRNAGln biosynthesis via transamidation"/>
    <property type="evidence" value="ECO:0007669"/>
    <property type="project" value="TreeGrafter"/>
</dbReference>
<dbReference type="GO" id="GO:0006412">
    <property type="term" value="P:translation"/>
    <property type="evidence" value="ECO:0007669"/>
    <property type="project" value="UniProtKB-UniRule"/>
</dbReference>
<dbReference type="FunFam" id="1.10.10.410:FF:000001">
    <property type="entry name" value="Aspartyl/glutamyl-tRNA(Asn/Gln) amidotransferase subunit B"/>
    <property type="match status" value="1"/>
</dbReference>
<dbReference type="FunFam" id="1.10.150.380:FF:000001">
    <property type="entry name" value="Aspartyl/glutamyl-tRNA(Asn/Gln) amidotransferase subunit B"/>
    <property type="match status" value="1"/>
</dbReference>
<dbReference type="Gene3D" id="1.10.10.410">
    <property type="match status" value="1"/>
</dbReference>
<dbReference type="Gene3D" id="1.10.150.380">
    <property type="entry name" value="GatB domain, N-terminal subdomain"/>
    <property type="match status" value="1"/>
</dbReference>
<dbReference type="HAMAP" id="MF_00121">
    <property type="entry name" value="GatB"/>
    <property type="match status" value="1"/>
</dbReference>
<dbReference type="InterPro" id="IPR017959">
    <property type="entry name" value="Asn/Gln-tRNA_amidoTrfase_suB/E"/>
</dbReference>
<dbReference type="InterPro" id="IPR006075">
    <property type="entry name" value="Asn/Gln-tRNA_Trfase_suB/E_cat"/>
</dbReference>
<dbReference type="InterPro" id="IPR018027">
    <property type="entry name" value="Asn/Gln_amidotransferase"/>
</dbReference>
<dbReference type="InterPro" id="IPR003789">
    <property type="entry name" value="Asn/Gln_tRNA_amidoTrase-B-like"/>
</dbReference>
<dbReference type="InterPro" id="IPR004413">
    <property type="entry name" value="GatB"/>
</dbReference>
<dbReference type="InterPro" id="IPR042114">
    <property type="entry name" value="GatB_C_1"/>
</dbReference>
<dbReference type="InterPro" id="IPR023168">
    <property type="entry name" value="GatB_Yqey_C_2"/>
</dbReference>
<dbReference type="InterPro" id="IPR017958">
    <property type="entry name" value="Gln-tRNA_amidoTrfase_suB_CS"/>
</dbReference>
<dbReference type="InterPro" id="IPR014746">
    <property type="entry name" value="Gln_synth/guanido_kin_cat_dom"/>
</dbReference>
<dbReference type="NCBIfam" id="TIGR00133">
    <property type="entry name" value="gatB"/>
    <property type="match status" value="1"/>
</dbReference>
<dbReference type="NCBIfam" id="NF004011">
    <property type="entry name" value="PRK05477.1-1"/>
    <property type="match status" value="1"/>
</dbReference>
<dbReference type="NCBIfam" id="NF004012">
    <property type="entry name" value="PRK05477.1-2"/>
    <property type="match status" value="1"/>
</dbReference>
<dbReference type="NCBIfam" id="NF004014">
    <property type="entry name" value="PRK05477.1-4"/>
    <property type="match status" value="1"/>
</dbReference>
<dbReference type="PANTHER" id="PTHR11659">
    <property type="entry name" value="GLUTAMYL-TRNA GLN AMIDOTRANSFERASE SUBUNIT B MITOCHONDRIAL AND PROKARYOTIC PET112-RELATED"/>
    <property type="match status" value="1"/>
</dbReference>
<dbReference type="PANTHER" id="PTHR11659:SF0">
    <property type="entry name" value="GLUTAMYL-TRNA(GLN) AMIDOTRANSFERASE SUBUNIT B, MITOCHONDRIAL"/>
    <property type="match status" value="1"/>
</dbReference>
<dbReference type="Pfam" id="PF02934">
    <property type="entry name" value="GatB_N"/>
    <property type="match status" value="1"/>
</dbReference>
<dbReference type="Pfam" id="PF02637">
    <property type="entry name" value="GatB_Yqey"/>
    <property type="match status" value="1"/>
</dbReference>
<dbReference type="SMART" id="SM00845">
    <property type="entry name" value="GatB_Yqey"/>
    <property type="match status" value="1"/>
</dbReference>
<dbReference type="SUPFAM" id="SSF89095">
    <property type="entry name" value="GatB/YqeY motif"/>
    <property type="match status" value="1"/>
</dbReference>
<dbReference type="SUPFAM" id="SSF55931">
    <property type="entry name" value="Glutamine synthetase/guanido kinase"/>
    <property type="match status" value="1"/>
</dbReference>
<dbReference type="PROSITE" id="PS01234">
    <property type="entry name" value="GATB"/>
    <property type="match status" value="1"/>
</dbReference>